<keyword id="KW-0066">ATP synthesis</keyword>
<keyword id="KW-1003">Cell membrane</keyword>
<keyword id="KW-0138">CF(0)</keyword>
<keyword id="KW-0375">Hydrogen ion transport</keyword>
<keyword id="KW-0406">Ion transport</keyword>
<keyword id="KW-0446">Lipid-binding</keyword>
<keyword id="KW-0472">Membrane</keyword>
<keyword id="KW-1185">Reference proteome</keyword>
<keyword id="KW-0812">Transmembrane</keyword>
<keyword id="KW-1133">Transmembrane helix</keyword>
<keyword id="KW-0813">Transport</keyword>
<dbReference type="EMBL" id="CP000411">
    <property type="protein sequence ID" value="ABJ56597.1"/>
    <property type="molecule type" value="Genomic_DNA"/>
</dbReference>
<dbReference type="RefSeq" id="WP_002816393.1">
    <property type="nucleotide sequence ID" value="NC_008528.1"/>
</dbReference>
<dbReference type="SMR" id="Q04G25"/>
<dbReference type="STRING" id="203123.OEOE_0660"/>
<dbReference type="GeneID" id="75066263"/>
<dbReference type="KEGG" id="ooe:OEOE_0660"/>
<dbReference type="eggNOG" id="COG0636">
    <property type="taxonomic scope" value="Bacteria"/>
</dbReference>
<dbReference type="HOGENOM" id="CLU_148047_1_1_9"/>
<dbReference type="Proteomes" id="UP000000774">
    <property type="component" value="Chromosome"/>
</dbReference>
<dbReference type="GO" id="GO:0005886">
    <property type="term" value="C:plasma membrane"/>
    <property type="evidence" value="ECO:0007669"/>
    <property type="project" value="UniProtKB-SubCell"/>
</dbReference>
<dbReference type="GO" id="GO:0045259">
    <property type="term" value="C:proton-transporting ATP synthase complex"/>
    <property type="evidence" value="ECO:0007669"/>
    <property type="project" value="UniProtKB-KW"/>
</dbReference>
<dbReference type="GO" id="GO:0033177">
    <property type="term" value="C:proton-transporting two-sector ATPase complex, proton-transporting domain"/>
    <property type="evidence" value="ECO:0007669"/>
    <property type="project" value="InterPro"/>
</dbReference>
<dbReference type="GO" id="GO:0008289">
    <property type="term" value="F:lipid binding"/>
    <property type="evidence" value="ECO:0007669"/>
    <property type="project" value="UniProtKB-KW"/>
</dbReference>
<dbReference type="GO" id="GO:0046933">
    <property type="term" value="F:proton-transporting ATP synthase activity, rotational mechanism"/>
    <property type="evidence" value="ECO:0007669"/>
    <property type="project" value="UniProtKB-UniRule"/>
</dbReference>
<dbReference type="CDD" id="cd18185">
    <property type="entry name" value="ATP-synt_Fo_c_ATPE"/>
    <property type="match status" value="1"/>
</dbReference>
<dbReference type="FunFam" id="1.20.20.10:FF:000004">
    <property type="entry name" value="ATP synthase subunit c"/>
    <property type="match status" value="1"/>
</dbReference>
<dbReference type="Gene3D" id="1.20.20.10">
    <property type="entry name" value="F1F0 ATP synthase subunit C"/>
    <property type="match status" value="1"/>
</dbReference>
<dbReference type="HAMAP" id="MF_01396">
    <property type="entry name" value="ATP_synth_c_bact"/>
    <property type="match status" value="1"/>
</dbReference>
<dbReference type="InterPro" id="IPR005953">
    <property type="entry name" value="ATP_synth_csu_bac/chlpt"/>
</dbReference>
<dbReference type="InterPro" id="IPR000454">
    <property type="entry name" value="ATP_synth_F0_csu"/>
</dbReference>
<dbReference type="InterPro" id="IPR020537">
    <property type="entry name" value="ATP_synth_F0_csu_DDCD_BS"/>
</dbReference>
<dbReference type="InterPro" id="IPR038662">
    <property type="entry name" value="ATP_synth_F0_csu_sf"/>
</dbReference>
<dbReference type="InterPro" id="IPR002379">
    <property type="entry name" value="ATPase_proteolipid_c-like_dom"/>
</dbReference>
<dbReference type="InterPro" id="IPR035921">
    <property type="entry name" value="F/V-ATP_Csub_sf"/>
</dbReference>
<dbReference type="NCBIfam" id="TIGR01260">
    <property type="entry name" value="ATP_synt_c"/>
    <property type="match status" value="1"/>
</dbReference>
<dbReference type="NCBIfam" id="NF005363">
    <property type="entry name" value="PRK06876.1"/>
    <property type="match status" value="1"/>
</dbReference>
<dbReference type="PANTHER" id="PTHR10031">
    <property type="entry name" value="ATP SYNTHASE LIPID-BINDING PROTEIN, MITOCHONDRIAL"/>
    <property type="match status" value="1"/>
</dbReference>
<dbReference type="PANTHER" id="PTHR10031:SF0">
    <property type="entry name" value="ATPASE PROTEIN 9"/>
    <property type="match status" value="1"/>
</dbReference>
<dbReference type="Pfam" id="PF00137">
    <property type="entry name" value="ATP-synt_C"/>
    <property type="match status" value="1"/>
</dbReference>
<dbReference type="PRINTS" id="PR00124">
    <property type="entry name" value="ATPASEC"/>
</dbReference>
<dbReference type="SUPFAM" id="SSF81333">
    <property type="entry name" value="F1F0 ATP synthase subunit C"/>
    <property type="match status" value="1"/>
</dbReference>
<dbReference type="PROSITE" id="PS00605">
    <property type="entry name" value="ATPASE_C"/>
    <property type="match status" value="1"/>
</dbReference>
<protein>
    <recommendedName>
        <fullName evidence="1">ATP synthase subunit c</fullName>
    </recommendedName>
    <alternativeName>
        <fullName evidence="1">ATP synthase F(0) sector subunit c</fullName>
    </alternativeName>
    <alternativeName>
        <fullName evidence="1">F-type ATPase subunit c</fullName>
        <shortName evidence="1">F-ATPase subunit c</shortName>
    </alternativeName>
    <alternativeName>
        <fullName evidence="1">Lipid-binding protein</fullName>
    </alternativeName>
</protein>
<proteinExistence type="inferred from homology"/>
<accession>Q04G25</accession>
<gene>
    <name evidence="1" type="primary">atpE</name>
    <name type="ordered locus">OEOE_0660</name>
</gene>
<organism>
    <name type="scientific">Oenococcus oeni (strain ATCC BAA-331 / PSU-1)</name>
    <dbReference type="NCBI Taxonomy" id="203123"/>
    <lineage>
        <taxon>Bacteria</taxon>
        <taxon>Bacillati</taxon>
        <taxon>Bacillota</taxon>
        <taxon>Bacilli</taxon>
        <taxon>Lactobacillales</taxon>
        <taxon>Lactobacillaceae</taxon>
        <taxon>Oenococcus</taxon>
    </lineage>
</organism>
<reference key="1">
    <citation type="journal article" date="2006" name="Proc. Natl. Acad. Sci. U.S.A.">
        <title>Comparative genomics of the lactic acid bacteria.</title>
        <authorList>
            <person name="Makarova K.S."/>
            <person name="Slesarev A."/>
            <person name="Wolf Y.I."/>
            <person name="Sorokin A."/>
            <person name="Mirkin B."/>
            <person name="Koonin E.V."/>
            <person name="Pavlov A."/>
            <person name="Pavlova N."/>
            <person name="Karamychev V."/>
            <person name="Polouchine N."/>
            <person name="Shakhova V."/>
            <person name="Grigoriev I."/>
            <person name="Lou Y."/>
            <person name="Rohksar D."/>
            <person name="Lucas S."/>
            <person name="Huang K."/>
            <person name="Goodstein D.M."/>
            <person name="Hawkins T."/>
            <person name="Plengvidhya V."/>
            <person name="Welker D."/>
            <person name="Hughes J."/>
            <person name="Goh Y."/>
            <person name="Benson A."/>
            <person name="Baldwin K."/>
            <person name="Lee J.-H."/>
            <person name="Diaz-Muniz I."/>
            <person name="Dosti B."/>
            <person name="Smeianov V."/>
            <person name="Wechter W."/>
            <person name="Barabote R."/>
            <person name="Lorca G."/>
            <person name="Altermann E."/>
            <person name="Barrangou R."/>
            <person name="Ganesan B."/>
            <person name="Xie Y."/>
            <person name="Rawsthorne H."/>
            <person name="Tamir D."/>
            <person name="Parker C."/>
            <person name="Breidt F."/>
            <person name="Broadbent J.R."/>
            <person name="Hutkins R."/>
            <person name="O'Sullivan D."/>
            <person name="Steele J."/>
            <person name="Unlu G."/>
            <person name="Saier M.H. Jr."/>
            <person name="Klaenhammer T."/>
            <person name="Richardson P."/>
            <person name="Kozyavkin S."/>
            <person name="Weimer B.C."/>
            <person name="Mills D.A."/>
        </authorList>
    </citation>
    <scope>NUCLEOTIDE SEQUENCE [LARGE SCALE GENOMIC DNA]</scope>
    <source>
        <strain>ATCC BAA-331 / PSU-1</strain>
    </source>
</reference>
<comment type="function">
    <text evidence="1">F(1)F(0) ATP synthase produces ATP from ADP in the presence of a proton or sodium gradient. F-type ATPases consist of two structural domains, F(1) containing the extramembraneous catalytic core and F(0) containing the membrane proton channel, linked together by a central stalk and a peripheral stalk. During catalysis, ATP synthesis in the catalytic domain of F(1) is coupled via a rotary mechanism of the central stalk subunits to proton translocation.</text>
</comment>
<comment type="function">
    <text evidence="1">Key component of the F(0) channel; it plays a direct role in translocation across the membrane. A homomeric c-ring of between 10-14 subunits forms the central stalk rotor element with the F(1) delta and epsilon subunits.</text>
</comment>
<comment type="subunit">
    <text evidence="1">F-type ATPases have 2 components, F(1) - the catalytic core - and F(0) - the membrane proton channel. F(1) has five subunits: alpha(3), beta(3), gamma(1), delta(1), epsilon(1). F(0) has three main subunits: a(1), b(2) and c(10-14). The alpha and beta chains form an alternating ring which encloses part of the gamma chain. F(1) is attached to F(0) by a central stalk formed by the gamma and epsilon chains, while a peripheral stalk is formed by the delta and b chains.</text>
</comment>
<comment type="subcellular location">
    <subcellularLocation>
        <location evidence="1">Cell membrane</location>
        <topology evidence="1">Multi-pass membrane protein</topology>
    </subcellularLocation>
</comment>
<comment type="similarity">
    <text evidence="1">Belongs to the ATPase C chain family.</text>
</comment>
<name>ATPL_OENOB</name>
<sequence length="70" mass="7370">MNYIAAGIALCGSAIGAGIGNGMLMAKLIESIARQPELEGNLRTNMFISMALVEAMPIIVIAMSFVLINE</sequence>
<feature type="chain" id="PRO_1000184427" description="ATP synthase subunit c">
    <location>
        <begin position="1"/>
        <end position="70"/>
    </location>
</feature>
<feature type="transmembrane region" description="Helical" evidence="1">
    <location>
        <begin position="4"/>
        <end position="24"/>
    </location>
</feature>
<feature type="transmembrane region" description="Helical" evidence="1">
    <location>
        <begin position="48"/>
        <end position="68"/>
    </location>
</feature>
<feature type="site" description="Reversibly protonated during proton transport" evidence="1">
    <location>
        <position position="54"/>
    </location>
</feature>
<evidence type="ECO:0000255" key="1">
    <source>
        <dbReference type="HAMAP-Rule" id="MF_01396"/>
    </source>
</evidence>